<dbReference type="EC" id="3.4.11.18" evidence="1"/>
<dbReference type="EMBL" id="AE001437">
    <property type="status" value="NOT_ANNOTATED_CDS"/>
    <property type="molecule type" value="Genomic_DNA"/>
</dbReference>
<dbReference type="RefSeq" id="WP_013913605.1">
    <property type="nucleotide sequence ID" value="NC_003030.1"/>
</dbReference>
<dbReference type="RefSeq" id="YP_008920787.1">
    <property type="nucleotide sequence ID" value="NC_003030.1"/>
</dbReference>
<dbReference type="SMR" id="P69000"/>
<dbReference type="GeneID" id="44999598"/>
<dbReference type="OrthoDB" id="9802055at2"/>
<dbReference type="Proteomes" id="UP000000814">
    <property type="component" value="Chromosome"/>
</dbReference>
<dbReference type="GO" id="GO:0005829">
    <property type="term" value="C:cytosol"/>
    <property type="evidence" value="ECO:0007669"/>
    <property type="project" value="TreeGrafter"/>
</dbReference>
<dbReference type="GO" id="GO:0004239">
    <property type="term" value="F:initiator methionyl aminopeptidase activity"/>
    <property type="evidence" value="ECO:0007669"/>
    <property type="project" value="UniProtKB-UniRule"/>
</dbReference>
<dbReference type="GO" id="GO:0046872">
    <property type="term" value="F:metal ion binding"/>
    <property type="evidence" value="ECO:0007669"/>
    <property type="project" value="UniProtKB-UniRule"/>
</dbReference>
<dbReference type="GO" id="GO:0070006">
    <property type="term" value="F:metalloaminopeptidase activity"/>
    <property type="evidence" value="ECO:0007669"/>
    <property type="project" value="UniProtKB-UniRule"/>
</dbReference>
<dbReference type="GO" id="GO:0006508">
    <property type="term" value="P:proteolysis"/>
    <property type="evidence" value="ECO:0007669"/>
    <property type="project" value="UniProtKB-KW"/>
</dbReference>
<dbReference type="CDD" id="cd01086">
    <property type="entry name" value="MetAP1"/>
    <property type="match status" value="1"/>
</dbReference>
<dbReference type="Gene3D" id="3.90.230.10">
    <property type="entry name" value="Creatinase/methionine aminopeptidase superfamily"/>
    <property type="match status" value="1"/>
</dbReference>
<dbReference type="HAMAP" id="MF_01974">
    <property type="entry name" value="MetAP_1"/>
    <property type="match status" value="1"/>
</dbReference>
<dbReference type="InterPro" id="IPR036005">
    <property type="entry name" value="Creatinase/aminopeptidase-like"/>
</dbReference>
<dbReference type="InterPro" id="IPR000994">
    <property type="entry name" value="Pept_M24"/>
</dbReference>
<dbReference type="InterPro" id="IPR001714">
    <property type="entry name" value="Pept_M24_MAP"/>
</dbReference>
<dbReference type="InterPro" id="IPR002467">
    <property type="entry name" value="Pept_M24A_MAP1"/>
</dbReference>
<dbReference type="NCBIfam" id="TIGR00500">
    <property type="entry name" value="met_pdase_I"/>
    <property type="match status" value="1"/>
</dbReference>
<dbReference type="PANTHER" id="PTHR43330">
    <property type="entry name" value="METHIONINE AMINOPEPTIDASE"/>
    <property type="match status" value="1"/>
</dbReference>
<dbReference type="PANTHER" id="PTHR43330:SF27">
    <property type="entry name" value="METHIONINE AMINOPEPTIDASE"/>
    <property type="match status" value="1"/>
</dbReference>
<dbReference type="Pfam" id="PF00557">
    <property type="entry name" value="Peptidase_M24"/>
    <property type="match status" value="1"/>
</dbReference>
<dbReference type="PRINTS" id="PR00599">
    <property type="entry name" value="MAPEPTIDASE"/>
</dbReference>
<dbReference type="SUPFAM" id="SSF55920">
    <property type="entry name" value="Creatinase/aminopeptidase"/>
    <property type="match status" value="1"/>
</dbReference>
<dbReference type="PROSITE" id="PS00680">
    <property type="entry name" value="MAP_1"/>
    <property type="match status" value="1"/>
</dbReference>
<organism>
    <name type="scientific">Clostridium acetobutylicum (strain ATCC 824 / DSM 792 / JCM 1419 / IAM 19013 / LMG 5710 / NBRC 13948 / NRRL B-527 / VKM B-1787 / 2291 / W)</name>
    <dbReference type="NCBI Taxonomy" id="272562"/>
    <lineage>
        <taxon>Bacteria</taxon>
        <taxon>Bacillati</taxon>
        <taxon>Bacillota</taxon>
        <taxon>Clostridia</taxon>
        <taxon>Eubacteriales</taxon>
        <taxon>Clostridiaceae</taxon>
        <taxon>Clostridium</taxon>
    </lineage>
</organism>
<comment type="function">
    <text evidence="1">Removes the N-terminal methionine from nascent proteins. The N-terminal methionine is often cleaved when the second residue in the primary sequence is small and uncharged (Met-Ala-, Cys, Gly, Pro, Ser, Thr, or Val). Requires deformylation of the N(alpha)-formylated initiator methionine before it can be hydrolyzed.</text>
</comment>
<comment type="catalytic activity">
    <reaction evidence="1">
        <text>Release of N-terminal amino acids, preferentially methionine, from peptides and arylamides.</text>
        <dbReference type="EC" id="3.4.11.18"/>
    </reaction>
</comment>
<comment type="cofactor">
    <cofactor evidence="1">
        <name>Co(2+)</name>
        <dbReference type="ChEBI" id="CHEBI:48828"/>
    </cofactor>
    <cofactor evidence="1">
        <name>Zn(2+)</name>
        <dbReference type="ChEBI" id="CHEBI:29105"/>
    </cofactor>
    <cofactor evidence="1">
        <name>Mn(2+)</name>
        <dbReference type="ChEBI" id="CHEBI:29035"/>
    </cofactor>
    <cofactor evidence="1">
        <name>Fe(2+)</name>
        <dbReference type="ChEBI" id="CHEBI:29033"/>
    </cofactor>
    <text evidence="1">Binds 2 divalent metal cations per subunit. Has a high-affinity and a low affinity metal-binding site. The true nature of the physiological cofactor is under debate. The enzyme is active with cobalt, zinc, manganese or divalent iron ions. Most likely, methionine aminopeptidases function as mononuclear Fe(2+)-metalloproteases under physiological conditions, and the catalytically relevant metal-binding site has been assigned to the histidine-containing high-affinity site.</text>
</comment>
<comment type="subunit">
    <text evidence="1">Monomer.</text>
</comment>
<comment type="similarity">
    <text evidence="1">Belongs to the peptidase M24A family. Methionine aminopeptidase type 1 subfamily.</text>
</comment>
<feature type="chain" id="PRO_0000148935" description="Methionine aminopeptidase">
    <location>
        <begin position="1"/>
        <end position="250"/>
    </location>
</feature>
<feature type="binding site" evidence="1">
    <location>
        <position position="77"/>
    </location>
    <ligand>
        <name>substrate</name>
    </ligand>
</feature>
<feature type="binding site" evidence="1">
    <location>
        <position position="95"/>
    </location>
    <ligand>
        <name>a divalent metal cation</name>
        <dbReference type="ChEBI" id="CHEBI:60240"/>
        <label>1</label>
    </ligand>
</feature>
<feature type="binding site" evidence="1">
    <location>
        <position position="106"/>
    </location>
    <ligand>
        <name>a divalent metal cation</name>
        <dbReference type="ChEBI" id="CHEBI:60240"/>
        <label>1</label>
    </ligand>
</feature>
<feature type="binding site" evidence="1">
    <location>
        <position position="106"/>
    </location>
    <ligand>
        <name>a divalent metal cation</name>
        <dbReference type="ChEBI" id="CHEBI:60240"/>
        <label>2</label>
        <note>catalytic</note>
    </ligand>
</feature>
<feature type="binding site" evidence="1">
    <location>
        <position position="169"/>
    </location>
    <ligand>
        <name>a divalent metal cation</name>
        <dbReference type="ChEBI" id="CHEBI:60240"/>
        <label>2</label>
        <note>catalytic</note>
    </ligand>
</feature>
<feature type="binding site" evidence="1">
    <location>
        <position position="176"/>
    </location>
    <ligand>
        <name>substrate</name>
    </ligand>
</feature>
<feature type="binding site" evidence="1">
    <location>
        <position position="202"/>
    </location>
    <ligand>
        <name>a divalent metal cation</name>
        <dbReference type="ChEBI" id="CHEBI:60240"/>
        <label>2</label>
        <note>catalytic</note>
    </ligand>
</feature>
<feature type="binding site" evidence="1">
    <location>
        <position position="233"/>
    </location>
    <ligand>
        <name>a divalent metal cation</name>
        <dbReference type="ChEBI" id="CHEBI:60240"/>
        <label>1</label>
    </ligand>
</feature>
<feature type="binding site" evidence="1">
    <location>
        <position position="233"/>
    </location>
    <ligand>
        <name>a divalent metal cation</name>
        <dbReference type="ChEBI" id="CHEBI:60240"/>
        <label>2</label>
        <note>catalytic</note>
    </ligand>
</feature>
<sequence>MIIIKNDTEIEYMRQAGKIVGETLNMLEKAAKPGVTTADLDRLAEDFIKKYNAIPSFKGYGGFPASICTSINEEVIHGIPSKHRVLHEGDIISVDCGAILNGYQGDAARTFAIGEISEEAAKLIKVTKESFFKGVEKAVIGNRLTDISHSIQEYVESFGYGVVRDYVGHGIGKEMHEDPEVPNYGRPGRGPKLVHGMVLAIEPMVDVGTYMVKTQSNDWTVVTQDGSLAAHYENTVAILDNGPEILTLCE</sequence>
<proteinExistence type="inferred from homology"/>
<keyword id="KW-0031">Aminopeptidase</keyword>
<keyword id="KW-0378">Hydrolase</keyword>
<keyword id="KW-0479">Metal-binding</keyword>
<keyword id="KW-0645">Protease</keyword>
<keyword id="KW-1185">Reference proteome</keyword>
<evidence type="ECO:0000255" key="1">
    <source>
        <dbReference type="HAMAP-Rule" id="MF_01974"/>
    </source>
</evidence>
<accession>P69000</accession>
<gene>
    <name evidence="1" type="primary">map</name>
    <name type="ordered locus">CA_C3111</name>
</gene>
<reference key="1">
    <citation type="journal article" date="2001" name="J. Bacteriol.">
        <title>Genome sequence and comparative analysis of the solvent-producing bacterium Clostridium acetobutylicum.</title>
        <authorList>
            <person name="Noelling J."/>
            <person name="Breton G."/>
            <person name="Omelchenko M.V."/>
            <person name="Makarova K.S."/>
            <person name="Zeng Q."/>
            <person name="Gibson R."/>
            <person name="Lee H.M."/>
            <person name="Dubois J."/>
            <person name="Qiu D."/>
            <person name="Hitti J."/>
            <person name="Wolf Y.I."/>
            <person name="Tatusov R.L."/>
            <person name="Sabathe F."/>
            <person name="Doucette-Stamm L.A."/>
            <person name="Soucaille P."/>
            <person name="Daly M.J."/>
            <person name="Bennett G.N."/>
            <person name="Koonin E.V."/>
            <person name="Smith D.R."/>
        </authorList>
    </citation>
    <scope>NUCLEOTIDE SEQUENCE [LARGE SCALE GENOMIC DNA]</scope>
    <source>
        <strain>ATCC 824 / DSM 792 / JCM 1419 / IAM 19013 / LMG 5710 / NBRC 13948 / NRRL B-527 / VKM B-1787 / 2291 / W</strain>
    </source>
</reference>
<reference key="2">
    <citation type="journal article" date="2005" name="Bioinformatics">
        <title>Improving genome annotations using phylogenetic profile anomaly detection.</title>
        <authorList>
            <person name="Mikkelsen T.S."/>
            <person name="Galagan J.E."/>
            <person name="Mesirov J.P."/>
        </authorList>
    </citation>
    <scope>IDENTIFICATION</scope>
</reference>
<protein>
    <recommendedName>
        <fullName evidence="1">Methionine aminopeptidase</fullName>
        <shortName evidence="1">MAP</shortName>
        <shortName evidence="1">MetAP</shortName>
        <ecNumber evidence="1">3.4.11.18</ecNumber>
    </recommendedName>
    <alternativeName>
        <fullName evidence="1">Peptidase M</fullName>
    </alternativeName>
</protein>
<name>MAP1_CLOAB</name>